<reference key="1">
    <citation type="journal article" date="2010" name="J. Bacteriol.">
        <title>Complete genome sequence of Enterobacter cloacae subsp. cloacae type strain ATCC 13047.</title>
        <authorList>
            <person name="Ren Y."/>
            <person name="Ren Y."/>
            <person name="Zhou Z."/>
            <person name="Guo X."/>
            <person name="Li Y."/>
            <person name="Feng L."/>
            <person name="Wang L."/>
        </authorList>
    </citation>
    <scope>NUCLEOTIDE SEQUENCE [LARGE SCALE GENOMIC DNA]</scope>
    <source>
        <strain>ATCC 13047 / DSM 30054 / NBRC 13535 / NCTC 10005 / WDCM 00083 / NCDC 279-56</strain>
    </source>
</reference>
<reference key="2">
    <citation type="journal article" date="2014" name="Mol. Microbiol.">
        <title>The F pilus mediates a novel pathway of CDI toxin import.</title>
        <authorList>
            <person name="Beck C.M."/>
            <person name="Diner E.J."/>
            <person name="Kim J.J."/>
            <person name="Low D.A."/>
            <person name="Hayes C.S."/>
        </authorList>
    </citation>
    <scope>FUNCTION</scope>
    <scope>SUBCELLULAR LOCATION</scope>
    <scope>DOMAIN</scope>
    <source>
        <strain>ATCC 13047 / DSM 30054 / NBRC 13535 / NCTC 10005 / WDCM 00083 / NCDC 279-56</strain>
    </source>
</reference>
<reference key="3">
    <citation type="journal article" date="2014" name="Mol. Microbiol.">
        <title>The proton-motive force is required for translocation of CDI toxins across the inner membrane of target bacteria.</title>
        <authorList>
            <person name="Ruhe Z.C."/>
            <person name="Nguyen J.Y."/>
            <person name="Beck C.M."/>
            <person name="Low D.A."/>
            <person name="Hayes C.S."/>
        </authorList>
    </citation>
    <scope>FUNCTION</scope>
    <scope>REQUIRES PMF FOR TRANSLOCATION</scope>
    <scope>SUBCELLULAR LOCATION</scope>
    <source>
        <strain>ATCC 13047 / DSM 30054 / NBRC 13535 / NCTC 10005 / WDCM 00083 / NCDC 279-56</strain>
    </source>
</reference>
<reference key="4">
    <citation type="journal article" date="2015" name="Proc. Natl. Acad. Sci. U.S.A.">
        <title>Contact-dependent growth inhibition toxins exploit multiple independent cell-entry pathways.</title>
        <authorList>
            <person name="Willett J.L."/>
            <person name="Gucinski G.C."/>
            <person name="Fatherree J.P."/>
            <person name="Low D.A."/>
            <person name="Hayes C.S."/>
        </authorList>
    </citation>
    <scope>FUNCTION</scope>
    <scope>RECEPTOR FOR ENTRY INTO TARGET CELL CYTOPLASM</scope>
    <scope>DOMAIN</scope>
    <source>
        <strain>ATCC 13047 / DSM 30054 / NBRC 13535 / NCTC 10005 / WDCM 00083 / NCDC 279-56</strain>
    </source>
</reference>
<reference key="5">
    <citation type="journal article" date="2014" name="Structure">
        <title>CdiA from Enterobacter cloacae delivers a toxic ribosomal RNase into target bacteria.</title>
        <authorList>
            <person name="Beck C.M."/>
            <person name="Morse R.P."/>
            <person name="Cunningham D.A."/>
            <person name="Iniguez A."/>
            <person name="Low D.A."/>
            <person name="Goulding C.W."/>
            <person name="Hayes C.S."/>
        </authorList>
    </citation>
    <scope>X-RAY CRYSTALLOGRAPHY (2.40 ANGSTROMS) OF 3087-3321 IN COMPLEX WITH CDII</scope>
    <scope>FUNCTION</scope>
    <scope>SUBUNIT</scope>
    <scope>SUBCELLULAR LOCATION</scope>
    <scope>INDUCTION</scope>
    <scope>DOMAIN</scope>
    <scope>MUTAGENESIS OF ASP-3289; ASP-3291; HIS-3293 AND LYS-3300</scope>
    <source>
        <strain>ATCC 13047 / DSM 30054 / NBRC 13535 / NCTC 10005 / WDCM 00083 / NCDC 279-56</strain>
    </source>
</reference>
<protein>
    <recommendedName>
        <fullName evidence="9">16S rRNA endonuclease CdiA</fullName>
        <shortName>rRNase CdiA</shortName>
        <ecNumber>3.1.-.-</ecNumber>
    </recommendedName>
    <alternativeName>
        <fullName>CdiA-ECL</fullName>
    </alternativeName>
    <alternativeName>
        <fullName>Toxin CdiA</fullName>
    </alternativeName>
</protein>
<dbReference type="EC" id="3.1.-.-"/>
<dbReference type="EMBL" id="CP001918">
    <property type="protein sequence ID" value="ADF63980.1"/>
    <property type="molecule type" value="Genomic_DNA"/>
</dbReference>
<dbReference type="RefSeq" id="WP_013098820.1">
    <property type="nucleotide sequence ID" value="NC_014121.1"/>
</dbReference>
<dbReference type="RefSeq" id="YP_003614929.1">
    <property type="nucleotide sequence ID" value="NC_014121.1"/>
</dbReference>
<dbReference type="PDB" id="4NTQ">
    <property type="method" value="X-ray"/>
    <property type="resolution" value="2.40 A"/>
    <property type="chains" value="A=3087-3321"/>
</dbReference>
<dbReference type="PDBsum" id="4NTQ"/>
<dbReference type="SMR" id="D5CBA0"/>
<dbReference type="DIP" id="DIP-60810N"/>
<dbReference type="STRING" id="716541.ECL_04451"/>
<dbReference type="EnsemblBacteria" id="ADF63980">
    <property type="protein sequence ID" value="ADF63980"/>
    <property type="gene ID" value="ECL_04451"/>
</dbReference>
<dbReference type="KEGG" id="enc:ECL_04451"/>
<dbReference type="PATRIC" id="fig|716541.4.peg.4605"/>
<dbReference type="eggNOG" id="COG3210">
    <property type="taxonomic scope" value="Bacteria"/>
</dbReference>
<dbReference type="HOGENOM" id="CLU_000043_2_2_6"/>
<dbReference type="OrthoDB" id="2664633at2"/>
<dbReference type="EvolutionaryTrace" id="D5CBA0"/>
<dbReference type="Proteomes" id="UP000002363">
    <property type="component" value="Chromosome"/>
</dbReference>
<dbReference type="GO" id="GO:0030430">
    <property type="term" value="C:host cell cytoplasm"/>
    <property type="evidence" value="ECO:0000314"/>
    <property type="project" value="UniProtKB"/>
</dbReference>
<dbReference type="GO" id="GO:0004521">
    <property type="term" value="F:RNA endonuclease activity"/>
    <property type="evidence" value="ECO:0000314"/>
    <property type="project" value="UniProtKB"/>
</dbReference>
<dbReference type="GO" id="GO:0090729">
    <property type="term" value="F:toxin activity"/>
    <property type="evidence" value="ECO:0007669"/>
    <property type="project" value="UniProtKB-KW"/>
</dbReference>
<dbReference type="CDD" id="cd20685">
    <property type="entry name" value="CdiA-CT_Ecl_RNase-like"/>
    <property type="match status" value="1"/>
</dbReference>
<dbReference type="FunFam" id="2.160.20.10:FF:000048">
    <property type="entry name" value="tRNA nuclease CdiA"/>
    <property type="match status" value="1"/>
</dbReference>
<dbReference type="Gene3D" id="3.10.380.20">
    <property type="entry name" value="Novel toxin 21 (CdiA), C-terminal domain"/>
    <property type="match status" value="1"/>
</dbReference>
<dbReference type="Gene3D" id="2.160.20.10">
    <property type="entry name" value="Single-stranded right-handed beta-helix, Pectin lyase-like"/>
    <property type="match status" value="1"/>
</dbReference>
<dbReference type="InterPro" id="IPR010069">
    <property type="entry name" value="CdiA_FHA1_rpt"/>
</dbReference>
<dbReference type="InterPro" id="IPR008638">
    <property type="entry name" value="FhaB/CdiA-like_TPS"/>
</dbReference>
<dbReference type="InterPro" id="IPR025157">
    <property type="entry name" value="Hemagglutinin_rpt"/>
</dbReference>
<dbReference type="InterPro" id="IPR028190">
    <property type="entry name" value="Ntox21"/>
</dbReference>
<dbReference type="InterPro" id="IPR038181">
    <property type="entry name" value="Ntox21_sf"/>
</dbReference>
<dbReference type="InterPro" id="IPR012334">
    <property type="entry name" value="Pectin_lyas_fold"/>
</dbReference>
<dbReference type="InterPro" id="IPR011050">
    <property type="entry name" value="Pectin_lyase_fold/virulence"/>
</dbReference>
<dbReference type="InterPro" id="IPR006914">
    <property type="entry name" value="VENN_dom"/>
</dbReference>
<dbReference type="NCBIfam" id="TIGR01901">
    <property type="entry name" value="adhes_NPXG"/>
    <property type="match status" value="1"/>
</dbReference>
<dbReference type="NCBIfam" id="TIGR01731">
    <property type="entry name" value="fil_hemag_20aa"/>
    <property type="match status" value="20"/>
</dbReference>
<dbReference type="Pfam" id="PF13332">
    <property type="entry name" value="Fil_haemagg_2"/>
    <property type="match status" value="4"/>
</dbReference>
<dbReference type="Pfam" id="PF15526">
    <property type="entry name" value="Ntox21"/>
    <property type="match status" value="1"/>
</dbReference>
<dbReference type="Pfam" id="PF04829">
    <property type="entry name" value="PT-VENN"/>
    <property type="match status" value="1"/>
</dbReference>
<dbReference type="Pfam" id="PF05860">
    <property type="entry name" value="TPS"/>
    <property type="match status" value="1"/>
</dbReference>
<dbReference type="SMART" id="SM00912">
    <property type="entry name" value="Haemagg_act"/>
    <property type="match status" value="1"/>
</dbReference>
<dbReference type="SUPFAM" id="SSF51126">
    <property type="entry name" value="Pectin lyase-like"/>
    <property type="match status" value="1"/>
</dbReference>
<sequence>MMKQDQVRFSQRALSALLSVLLATQPLLPAVAASITPSGNTQMDKAANGVPVVNIATPNQSGISHNKYNDYNVGKEGLILNNATGQLNQTQLGGLIQNNPNLKAGQEAKGIINEVTGANRSNLQGYTEVAGKAANVIVANPYGITCNGCGFINTPNVTLTTGKPVLDASGKLQSLDVTQGAVTIEGAGLNGSQSDAVSIISRATEINVQLHAKDLRVVAGANRVAADGSVSALKGEGTAPKVAVDTGALGGMYANRIRLVSSETGVGVNLGNLNARQGDIALSSAGKVVLKNTLASGSTTVSAADVTLRGDHKAGGNVTVSGQTALTLDQAHVAADNNLQLTTRGTLTQNGGAFTAANDATLAATTLIQSVDAQASAGRHLAVNAEKNAALNGSVVAGQQLSVKGGELVQQGNLSASEIALNAQTLTQESRSTTNASGNITLTTSGHSQLKGSTTAGQSLAVSAGSLANHGALAAVADTRINTGIFSNTGTVQGNSLTVSGTDITSSGALKSASTLDIRADNATLSGETGAKGKTTVTASGNLNNSGTLISDDTLTLNAAQIVNSGTLSGVRGLTTSGKTFTASATSVTQSDGDVALNNTDTTLAGETSAGGAVTVQGRSLNTTATAQTQGNSVGVAVQNAKLEGTQAAKGNMTLKADSSLNHTGKSSASGLKVETGHLSNSGTLTASALVIDSPEVINGGLIHAGQTLSLVTRLLDNRSSGVLYSPSALSLSLSELNNAGIITSDAALSLSGSNLTNSGELSGTSLAIDYETLKNSAEGMLLAQGANRITAQSVSSAGSMVGNTLTLNADRLESAGLLQGDSALSLTAGILNLLTGSRTLTGGALGLSGTTLTTAGQLQGQDVSIRSHDWTNRGSSLATGSLDVTTAGTLSNTGELMSQGNGTLNAVTTVNSGNMLSAGDLSLNGKTLRNSGTLQGNRVTAHQDTITNSGTLTGIAALMLAARLEMAAPLLTLVNDASGSLLTAGELSVTGGDLRNAGQWQGKRVLIHAQALTNGGAIQAENLLDAQIDSTLTGTAGSKITSNGELALSALTLANSGQWIAKHLTLGASTLNNSGEITGVVALSVALTQLNNQAGGKLLSAGALTLDVENATNAGQIQGKATTVTAGQLINSGRLQGEALTLNASGALNNTASGVLLSENALTVSTATLNNQGTLQGGGESSVKATTRVQNDGKMLSGGKLTLTAPELANSSSGLVQAVRLLLDVVKAVNGGNVLATTRAELRGSSLDNSGTLQGADLQANYQSVTNSGTVLGTTSLTINGDALDNTESGKLYSGDKLLLDVRNYSGRGDVVSLGDTTLKLVNALVNTGTLAASKTLSVSSQNAMTNSGVMQGNAIALSAGGAFTNNGTLTTGNGSSTFNAQSLLLNASGSLQAGGDVQLTSRENITVNGFTGTAGSLTMTAAGTLLNTALIYAGNNISLFAARIHNIYGDILADNSLWMQKNAVGEANAEVVNRSGTIETTRGDITVNTGHLLNEADGLTVSQSEREYPDAIPAADEHYFSYDLNGRRSDFVLLLEDWKNDGSKVVYDWYEQCLGSGANGSGQCRDRVDYRLTGEDIRQFLLSESVVSVSATGSSARIAAGRDITINAGTLDNRASHILAGRNAVLAGGTLNNLSAEGGRRVTYVQAEYRCEWFYRDCSDSKWEPLTQYPDGSWGWFDEDYGWYGWVPYILGERTTEFVADGGVYRSVISAGGNVSANFTSDISNTNVTANSGEFSNTIDAPTLNTLSPEAIGKGLNSESLAQGGSADIRFPEQLGNITDALKDISGGSSLSDQNGSSGNYPLPSGNNGYFVPSTDPDSPYLITVNPKLDELGNMDDSLFNGLYDLLGITPGATPRETNSAYTDRNQFLGSSYFLDRLGLNPDRDYRFLGDAAFDTRYVSNAILNQTGSRYINGIGSDLDQMRYLMDSAAEQQKTLGLKFGVALTAEQVAALDKSMLWWESATINGQTVMIPKVYLSPKDVTVHSGSVISGNNVQLAGGNVINSGSTIAAQNGLSIDSSNSLSNLNAGLLSAGGGLNLSALGDINNIGSTISGKTVGLESVAGSINNITRAQQWNVDAGNVHFSGTDVGKTASITATDGLTMRAGQDINVTGANVSAGGSLGMAAGNDINITANEIVTSEGRAGRNRATTETASVTHQGSTLSAGDDLTLQAGNDVNARAAAIAAEGDVGIQAGRDVDLLAEASMERSSSQAKKKTAIDESVRQQGTEIASGGNTVILAGRDVTAQAADVTAQGDIGVAAGRDVNLTTATESDYRYREQTKTSSGFLSKKTTHTIEEESATREKGSLLSGDNVTVSAGNNLRVLGSAVAGDGDVALSAGNNVDIVAATNTDTAWRFKETKKSGLMGTGGIGFTIGSSKSTHDLREQGTTQSESFSTVGSTGGNVSIAAGKQAHIGGADIIAQKDISLTGDSVVIEPGHDKRTRDEKFEQKSSGLTVALSGAAGSAVNNAVTTAQSAKQSSDSRLAALQGTQAALSGVQAGQAVALDQVKGDSDKRNNNTIGVSASIGSQSSKSSSHMESETTTGSTLSAGNNVTIKATGSDITVAGSQIKAGKDVTLDAARDVNLIASQDTQQTTGKNSSSGGSLGVGVGVGSGGAGISISANANSSKGHEKGNGVWQNETTVDAGNRVTINTGRDATIAGAQVSGETVVADIGRDLTIASTQDSDHYNSKQNSVSGGAGYTFGAGGFSGSINVSRDKMTSDYDSVQEQSGLFAGNGGFDVTVGNHTQLDSGVIASTATADKNRLDTGTLGFSDIHNQADFKTEHQGAGISSGGSIGKQFAGNMANALLAGGGNSGHAEGTTQAAVSEGTLIIRDKENQKQDVADLSRDAEHANGSISPIFDKEKEQQRLQEVQLIGEIGSQVVDIANTQGEINGLNAGRKELADKGITEPGADASDEVKAAYQNALRETDAYKTTTAKYGTGSDLQRGIQAATAALQGLAGSDLTAALAGASAPELAYRIGHGMGIDNNTAAKTIAHAILGGAVAALQGNSAAAGAAGAATGELAAKAIAGMLYPDVKDLSTLSEEQKQTVSALATISAGMAGGLAGDSTGSAVAGGQAGKNAAENNSLALVARGCAVAAPCRTKVAEQLLEIGAKAGIAGLAGAAVKDMADKMTSDELEHLVTLEMMGNDEIIAKYVSLLHDKYAPSHTGGNLLPETLPGHTGNNTGSVDTGPNHTGNTNRQNDSGSNNTGNTEGAPNTGGNTTITPIPNGPSKDDIAYLALKGKEAQEAASNLGFDRRIPPQKAPFNSHGQPVFYDGKNYITPDIDSHNVTNGWKMFNSKGKRIGTYDSGLNRIKD</sequence>
<name>CDIA_ENTCC</name>
<comment type="function">
    <text evidence="5 6 8">Toxic component of a toxin-immunity protein module, which functions as a cellular contact-dependent growth inhibition (CDI) system. CDI modules allow bacteria to communicate with and inhibit the growth of closely related neighboring bacteria in a contact-dependent fashion; upon forced induction decreases E.cloacae target cell counts about 20-fold, about 100-fold in E.coli. Intracellular expression of CdiA-CT (residues 3087-3321) inhibits E.coli cell growth when induced, but coexpression with its cognate immunity protein CdiI allows cell growth. Cleaves 16S rRNA in vivo and in vitro between adenine 1493 and guanosine 1494 of E.coli 16S rRNA. Inhibition of 16S rRNA cleavage is specific to the cognate immunity protein, non-cognate CdiI from E.chrysanthemi strain EC16 does not inhibit this protein (PubMed:24657090). Purified CdiA-CT inhibits E.coli cell growth when added to cultures but not when added as a complex with cognate CdiI, suggesting cognate CdiI prevents import into the target cell. CdiA-CT (without CdiI) is probably imported in an F-pilus-mediated fashion, although it is not clear if this is physiologically significant (PubMed:24889811). Gains access to the cytoplasm of target cells by using integral inner membrane protein FtsH (PubMed:26305955).</text>
</comment>
<comment type="function">
    <text evidence="9">The CdiA protein is thought to be exported from the cell through the central lumen of CdiB, the other half of its two-partner system (TPS). The TPS domain probably remains associated with CdiB while the FHA-1 domain forms an extended filament with the receptor-binding domain (RBD) at its extremity; in the secretion arrested state the C-terminus of the RBD and YP domains form a hairpin-like structure as the FHA-2, PT and CT domains are periplasmic. The YP domain is probably responsible for this arrest at the point where it re-enters the host cell periplasm. Upon binding to a target cell outer membrane receptor a signal is transmitted to activate secretion. The filament elongates slightly, the rest of CdiA is secreted and the FHA-2 domain becomes stably associated with the target cell's outer membrane where it facilitates entry of the toxic CT domain into the target cell periplasm. From there the toxic CT domain is cleaved and gains access to the target cell cytoplasm via an inner membrane protein (FtsH for this CDI).</text>
</comment>
<comment type="subunit">
    <text evidence="5">Interacts with cognate immunity protein CdiI, blocking the active site of the nuclease.</text>
</comment>
<comment type="subcellular location">
    <subcellularLocation>
        <location evidence="5 6 7">Target cell</location>
        <location evidence="5 6 7">Target cell cytoplasm</location>
    </subcellularLocation>
    <text evidence="7 9">Secreted to the cell surface by CdiB, its two partner secretion pathway (TPS) partner (Probable). Toxin translocation into the target cell depends on the proton motive force of the target cell, but not on tolA or tonB.</text>
</comment>
<comment type="induction">
    <text evidence="5">Not expressed under laboratory conditions.</text>
</comment>
<comment type="domain">
    <text evidence="5 6 10">The 16S rRNASe and CDI activities reside in the C-terminal (CT) domain, residues 3087-3321 (PubMed:24657090, PubMed:24889811). The inner membrane translocation domain (IMTD) targets the toxin to a specific target cell inner membrane protein (FtsH in this case), which delivers the toxin to the target cell cytoplasm (Probable).</text>
</comment>
<comment type="similarity">
    <text evidence="9">In the N-terminal section; belongs to the CdiA toxin family.</text>
</comment>
<evidence type="ECO:0000250" key="1">
    <source>
        <dbReference type="UniProtKB" id="A0A1S4NYE3"/>
    </source>
</evidence>
<evidence type="ECO:0000250" key="2">
    <source>
        <dbReference type="UniProtKB" id="Q3YL96"/>
    </source>
</evidence>
<evidence type="ECO:0000255" key="3"/>
<evidence type="ECO:0000256" key="4">
    <source>
        <dbReference type="SAM" id="MobiDB-lite"/>
    </source>
</evidence>
<evidence type="ECO:0000269" key="5">
    <source>
    </source>
</evidence>
<evidence type="ECO:0000269" key="6">
    <source>
    </source>
</evidence>
<evidence type="ECO:0000269" key="7">
    <source>
    </source>
</evidence>
<evidence type="ECO:0000269" key="8">
    <source>
    </source>
</evidence>
<evidence type="ECO:0000305" key="9"/>
<evidence type="ECO:0000305" key="10">
    <source>
    </source>
</evidence>
<evidence type="ECO:0007829" key="11">
    <source>
        <dbReference type="PDB" id="4NTQ"/>
    </source>
</evidence>
<accession>D5CBA0</accession>
<keyword id="KW-0002">3D-structure</keyword>
<keyword id="KW-0255">Endonuclease</keyword>
<keyword id="KW-0378">Hydrolase</keyword>
<keyword id="KW-0540">Nuclease</keyword>
<keyword id="KW-1185">Reference proteome</keyword>
<keyword id="KW-0732">Signal</keyword>
<keyword id="KW-1266">Target cell cytoplasm</keyword>
<keyword id="KW-0800">Toxin</keyword>
<keyword id="KW-0843">Virulence</keyword>
<feature type="signal peptide" evidence="3">
    <location>
        <begin position="1"/>
        <end position="32"/>
    </location>
</feature>
<feature type="chain" id="PRO_0000432090" description="16S rRNA endonuclease CdiA" evidence="3">
    <location>
        <begin position="33"/>
        <end position="3321"/>
    </location>
</feature>
<feature type="region of interest" description="Two-partner system transport domain (TPS)" evidence="2">
    <location>
        <begin position="37"/>
        <end position="323"/>
    </location>
</feature>
<feature type="region of interest" description="FHA-1" evidence="9">
    <location>
        <begin position="332"/>
        <end position="1496"/>
    </location>
</feature>
<feature type="region of interest" description="Disordered" evidence="4">
    <location>
        <begin position="430"/>
        <end position="453"/>
    </location>
</feature>
<feature type="region of interest" description="Receptor binding domain (RBD)" evidence="1">
    <location>
        <begin position="1497"/>
        <end position="1802"/>
    </location>
</feature>
<feature type="region of interest" description="Disordered" evidence="4">
    <location>
        <begin position="1788"/>
        <end position="1812"/>
    </location>
</feature>
<feature type="region of interest" description="YP domain" evidence="2">
    <location>
        <begin position="1803"/>
        <end position="1987"/>
    </location>
</feature>
<feature type="region of interest" description="Periplasmic FHA-1 repeat (pFR)" evidence="9">
    <location>
        <begin position="1837"/>
        <end position="1875"/>
    </location>
</feature>
<feature type="region of interest" description="FHA-2" evidence="9">
    <location>
        <begin position="1988"/>
        <end position="2586"/>
    </location>
</feature>
<feature type="region of interest" description="Disordered" evidence="4">
    <location>
        <begin position="2510"/>
        <end position="2552"/>
    </location>
</feature>
<feature type="region of interest" description="CT domain; toxic when added to the outside of E.coli, 16S rRNase activity" evidence="5 6">
    <location>
        <begin position="3087"/>
        <end position="3321"/>
    </location>
</feature>
<feature type="region of interest" description="Inner membrane translocation domain (IMTD), targets protein to FtsH" evidence="10">
    <location>
        <begin position="3091"/>
        <end position="3208"/>
    </location>
</feature>
<feature type="region of interest" description="Disordered" evidence="4">
    <location>
        <begin position="3174"/>
        <end position="3236"/>
    </location>
</feature>
<feature type="short sequence motif" description="AENN CT cleavage motif" evidence="9">
    <location>
        <begin position="3087"/>
        <end position="3090"/>
    </location>
</feature>
<feature type="compositionally biased region" description="Polar residues" evidence="4">
    <location>
        <begin position="1789"/>
        <end position="1810"/>
    </location>
</feature>
<feature type="compositionally biased region" description="Low complexity" evidence="4">
    <location>
        <begin position="2525"/>
        <end position="2548"/>
    </location>
</feature>
<feature type="compositionally biased region" description="Polar residues" evidence="4">
    <location>
        <begin position="3186"/>
        <end position="3231"/>
    </location>
</feature>
<feature type="mutagenesis site" description="No CDI activity, loss of rRNase, when expressed as isolated CT domain." evidence="5">
    <original>D</original>
    <variation>A</variation>
    <location>
        <position position="3289"/>
    </location>
</feature>
<feature type="mutagenesis site" description="Delayed CDI activity, reduced rRNase, when expressed as isolated CT domain." evidence="5">
    <original>D</original>
    <variation>A</variation>
    <location>
        <position position="3291"/>
    </location>
</feature>
<feature type="mutagenesis site" description="No CDI activity, loss of rRNase, when expressed as isolated CT domain in vitro, or in vivo as a fusion with E.coli strain EC93 CdiA." evidence="5">
    <original>H</original>
    <variation>A</variation>
    <location>
        <position position="3293"/>
    </location>
</feature>
<feature type="mutagenesis site" description="No CDI activity, loss of rRNase, when expressed as isolated CT domain." evidence="5">
    <original>K</original>
    <variation>A</variation>
    <location>
        <position position="3300"/>
    </location>
</feature>
<feature type="helix" evidence="11">
    <location>
        <begin position="3250"/>
        <end position="3256"/>
    </location>
</feature>
<feature type="turn" evidence="11">
    <location>
        <begin position="3257"/>
        <end position="3259"/>
    </location>
</feature>
<feature type="strand" evidence="11">
    <location>
        <begin position="3262"/>
        <end position="3264"/>
    </location>
</feature>
<feature type="strand" evidence="11">
    <location>
        <begin position="3278"/>
        <end position="3280"/>
    </location>
</feature>
<feature type="strand" evidence="11">
    <location>
        <begin position="3285"/>
        <end position="3288"/>
    </location>
</feature>
<feature type="turn" evidence="11">
    <location>
        <begin position="3295"/>
        <end position="3297"/>
    </location>
</feature>
<feature type="strand" evidence="11">
    <location>
        <begin position="3299"/>
        <end position="3302"/>
    </location>
</feature>
<feature type="strand" evidence="11">
    <location>
        <begin position="3306"/>
        <end position="3312"/>
    </location>
</feature>
<feature type="strand" evidence="11">
    <location>
        <begin position="3318"/>
        <end position="3320"/>
    </location>
</feature>
<gene>
    <name type="primary">cdiA</name>
    <name type="ordered locus">ECL_04451</name>
</gene>
<proteinExistence type="evidence at protein level"/>
<organism>
    <name type="scientific">Enterobacter cloacae subsp. cloacae (strain ATCC 13047 / DSM 30054 / NBRC 13535 / NCTC 10005 / WDCM 00083 / NCDC 279-56)</name>
    <dbReference type="NCBI Taxonomy" id="716541"/>
    <lineage>
        <taxon>Bacteria</taxon>
        <taxon>Pseudomonadati</taxon>
        <taxon>Pseudomonadota</taxon>
        <taxon>Gammaproteobacteria</taxon>
        <taxon>Enterobacterales</taxon>
        <taxon>Enterobacteriaceae</taxon>
        <taxon>Enterobacter</taxon>
        <taxon>Enterobacter cloacae complex</taxon>
    </lineage>
</organism>